<comment type="subunit">
    <text evidence="1">Homodimer; disulfide-linked.</text>
</comment>
<comment type="subcellular location">
    <subcellularLocation>
        <location>Secreted</location>
    </subcellularLocation>
</comment>
<comment type="tissue specificity">
    <text>Expressed by the venom gland.</text>
</comment>
<comment type="allergen">
    <text>Causes an allergic reaction in human. The most common cause of insect venom allergy in the southeastern United States is the imported fire ant.</text>
</comment>
<comment type="similarity">
    <text evidence="4">Belongs to the ant venom allergen 2/4 family.</text>
</comment>
<protein>
    <recommendedName>
        <fullName>Venom allergen 2</fullName>
    </recommendedName>
    <alternativeName>
        <fullName>Allergen Sol i II</fullName>
    </alternativeName>
    <alternativeName>
        <fullName>Venom allergen II</fullName>
    </alternativeName>
    <allergenName>Sol i 2</allergenName>
</protein>
<accession>P35775</accession>
<organism>
    <name type="scientific">Solenopsis invicta</name>
    <name type="common">Red imported fire ant</name>
    <name type="synonym">Solenopsis wagneri</name>
    <dbReference type="NCBI Taxonomy" id="13686"/>
    <lineage>
        <taxon>Eukaryota</taxon>
        <taxon>Metazoa</taxon>
        <taxon>Ecdysozoa</taxon>
        <taxon>Arthropoda</taxon>
        <taxon>Hexapoda</taxon>
        <taxon>Insecta</taxon>
        <taxon>Pterygota</taxon>
        <taxon>Neoptera</taxon>
        <taxon>Endopterygota</taxon>
        <taxon>Hymenoptera</taxon>
        <taxon>Apocrita</taxon>
        <taxon>Aculeata</taxon>
        <taxon>Formicoidea</taxon>
        <taxon>Formicidae</taxon>
        <taxon>Myrmicinae</taxon>
        <taxon>Solenopsis</taxon>
    </lineage>
</organism>
<dbReference type="EMBL" id="L09560">
    <property type="status" value="NOT_ANNOTATED_CDS"/>
    <property type="molecule type" value="mRNA"/>
</dbReference>
<dbReference type="PIR" id="S32389">
    <property type="entry name" value="A37330"/>
</dbReference>
<dbReference type="RefSeq" id="XP_039310129.1">
    <property type="nucleotide sequence ID" value="XM_039454195.1"/>
</dbReference>
<dbReference type="PDB" id="2YGU">
    <property type="method" value="X-ray"/>
    <property type="resolution" value="2.60 A"/>
    <property type="chains" value="A/B/C/D/E/F/G/H=20-138"/>
</dbReference>
<dbReference type="PDBsum" id="2YGU"/>
<dbReference type="SMR" id="P35775"/>
<dbReference type="Allergome" id="3482">
    <property type="allergen name" value="Sol i 2.0101"/>
</dbReference>
<dbReference type="Allergome" id="631">
    <property type="allergen name" value="Sol i 2"/>
</dbReference>
<dbReference type="EnsemblMetazoa" id="XM_039454195.1">
    <property type="protein sequence ID" value="XP_039310129.1"/>
    <property type="gene ID" value="LOC105205300"/>
</dbReference>
<dbReference type="GeneID" id="105205300"/>
<dbReference type="EvolutionaryTrace" id="P35775"/>
<dbReference type="GO" id="GO:0005576">
    <property type="term" value="C:extracellular region"/>
    <property type="evidence" value="ECO:0007669"/>
    <property type="project" value="UniProtKB-SubCell"/>
</dbReference>
<dbReference type="CDD" id="cd12800">
    <property type="entry name" value="Sol_i_2"/>
    <property type="match status" value="1"/>
</dbReference>
<dbReference type="Gene3D" id="1.10.238.190">
    <property type="match status" value="1"/>
</dbReference>
<dbReference type="InterPro" id="IPR020181">
    <property type="entry name" value="Ant_venom_allergen_Sol_i_2"/>
</dbReference>
<dbReference type="InterPro" id="IPR038211">
    <property type="entry name" value="Ant_venon_allerg_soli_2/4_sf"/>
</dbReference>
<dbReference type="InterPro" id="IPR055216">
    <property type="entry name" value="Sol_i_2/4"/>
</dbReference>
<dbReference type="Pfam" id="PF22750">
    <property type="entry name" value="Sol_i_2"/>
    <property type="match status" value="1"/>
</dbReference>
<sequence length="138" mass="15289">MKSFVLATCLLGFAQIIYADNKELKIIRKDVAECLRTLPKCGNQPDDPLARVDVWHCAMAKRGVYDNPDPAVIKERSMKMCTKIITDPANVENCKKVASRCVDRETQGPKSNRQKAVNIIGCALRAGVAETTVLARKK</sequence>
<name>VA2_SOLIN</name>
<keyword id="KW-0002">3D-structure</keyword>
<keyword id="KW-0020">Allergen</keyword>
<keyword id="KW-0903">Direct protein sequencing</keyword>
<keyword id="KW-1015">Disulfide bond</keyword>
<keyword id="KW-0964">Secreted</keyword>
<keyword id="KW-0732">Signal</keyword>
<feature type="signal peptide" evidence="2 3">
    <location>
        <begin position="1"/>
        <end position="19"/>
    </location>
</feature>
<feature type="chain" id="PRO_0000022646" description="Venom allergen 2">
    <location>
        <begin position="20"/>
        <end position="138"/>
    </location>
</feature>
<feature type="disulfide bond" evidence="1">
    <location>
        <begin position="34"/>
        <end position="57"/>
    </location>
</feature>
<feature type="disulfide bond" description="Interchain" evidence="1">
    <location>
        <position position="41"/>
    </location>
</feature>
<feature type="disulfide bond" evidence="1">
    <location>
        <begin position="81"/>
        <end position="94"/>
    </location>
</feature>
<feature type="disulfide bond" evidence="1">
    <location>
        <begin position="101"/>
        <end position="122"/>
    </location>
</feature>
<feature type="helix" evidence="5">
    <location>
        <begin position="21"/>
        <end position="37"/>
    </location>
</feature>
<feature type="helix" evidence="5">
    <location>
        <begin position="48"/>
        <end position="50"/>
    </location>
</feature>
<feature type="helix" evidence="5">
    <location>
        <begin position="52"/>
        <end position="61"/>
    </location>
</feature>
<feature type="turn" evidence="5">
    <location>
        <begin position="62"/>
        <end position="65"/>
    </location>
</feature>
<feature type="helix" evidence="5">
    <location>
        <begin position="70"/>
        <end position="84"/>
    </location>
</feature>
<feature type="helix" evidence="5">
    <location>
        <begin position="88"/>
        <end position="105"/>
    </location>
</feature>
<feature type="strand" evidence="5">
    <location>
        <begin position="108"/>
        <end position="110"/>
    </location>
</feature>
<feature type="helix" evidence="5">
    <location>
        <begin position="112"/>
        <end position="125"/>
    </location>
</feature>
<feature type="helix" evidence="5">
    <location>
        <begin position="128"/>
        <end position="131"/>
    </location>
</feature>
<evidence type="ECO:0000269" key="1">
    <source>
    </source>
</evidence>
<evidence type="ECO:0000269" key="2">
    <source>
    </source>
</evidence>
<evidence type="ECO:0000269" key="3">
    <source>
    </source>
</evidence>
<evidence type="ECO:0000305" key="4"/>
<evidence type="ECO:0007829" key="5">
    <source>
        <dbReference type="PDB" id="2YGU"/>
    </source>
</evidence>
<proteinExistence type="evidence at protein level"/>
<reference key="1">
    <citation type="journal article" date="1993" name="FEBS Lett.">
        <title>Nucleotide sequence of cDNA encoding the fire ant venom protein Sol i II.</title>
        <authorList>
            <person name="Schmidt M."/>
            <person name="Walker R.B."/>
            <person name="Hoffman D.R."/>
            <person name="McConnell T.J."/>
        </authorList>
    </citation>
    <scope>NUCLEOTIDE SEQUENCE [MRNA]</scope>
    <source>
        <tissue>Venom gland</tissue>
    </source>
</reference>
<reference key="2">
    <citation type="journal article" date="1993" name="J. Allergy Clin. Immunol.">
        <title>Allergens in Hymenoptera venom XXIV: the amino acid sequences of imported fire ant venom allergens Sol i II, Sol i III, and Sol i IV.</title>
        <authorList>
            <person name="Hoffman D.R."/>
        </authorList>
    </citation>
    <scope>PROTEIN SEQUENCE OF 20-138</scope>
    <source>
        <tissue>Venom</tissue>
    </source>
</reference>
<reference key="3">
    <citation type="journal article" date="1990" name="J. Allergy Clin. Immunol.">
        <title>Allergens in Hymenoptera venom. XXII. Comparison of venoms from two species of imported fire ants, Solenopsis invicta and richteri.</title>
        <authorList>
            <person name="Hoffman D.R."/>
            <person name="Smith A.M."/>
            <person name="Schmidt M."/>
            <person name="Moffitt J.E."/>
            <person name="Guralnick M."/>
        </authorList>
    </citation>
    <scope>PROTEIN SEQUENCE OF 20-87</scope>
    <source>
        <tissue>Venom</tissue>
    </source>
</reference>
<reference key="4">
    <citation type="journal article" date="2012" name="J. Mol. Biol.">
        <title>Crystal structure of Sol I 2: a major allergen from fire ant venom.</title>
        <authorList>
            <person name="Borer A.S."/>
            <person name="Wassmann P."/>
            <person name="Schmidt M."/>
            <person name="Hoffman D.R."/>
            <person name="Zhou J.J."/>
            <person name="Wright C."/>
            <person name="Schirmer T."/>
            <person name="Markovic-Housley Z."/>
        </authorList>
    </citation>
    <scope>X-RAY CRYSTALLOGRAPHY (2.6 ANGSTROMS) OF 20-138</scope>
    <scope>SUBUNIT</scope>
    <scope>DISULFIDE BONDS</scope>
</reference>